<accession>Q1C4F3</accession>
<sequence>MTQTIFMVGARGAGKTTIGKALAQALGYRFVDTDLFMQQTSQMTVAEVVESEGWDGFRLRESMALQAVTAPKTVVATGGGAVLSSENRAFMRDHGRVIYLRASAAVLAKRLAEDPEEAQRPSLTGKPIVEEILDVLASREALYQDVAHHVLDGTQTPSLVVEQILQMLTGEMVK</sequence>
<proteinExistence type="inferred from homology"/>
<dbReference type="EC" id="2.7.1.71" evidence="1"/>
<dbReference type="EMBL" id="CP000308">
    <property type="protein sequence ID" value="ABG14669.1"/>
    <property type="molecule type" value="Genomic_DNA"/>
</dbReference>
<dbReference type="RefSeq" id="WP_002208693.1">
    <property type="nucleotide sequence ID" value="NZ_CP009906.1"/>
</dbReference>
<dbReference type="SMR" id="Q1C4F3"/>
<dbReference type="GeneID" id="57975502"/>
<dbReference type="KEGG" id="ypa:YPA_2707"/>
<dbReference type="UniPathway" id="UPA00053">
    <property type="reaction ID" value="UER00088"/>
</dbReference>
<dbReference type="Proteomes" id="UP000001971">
    <property type="component" value="Chromosome"/>
</dbReference>
<dbReference type="GO" id="GO:0005829">
    <property type="term" value="C:cytosol"/>
    <property type="evidence" value="ECO:0007669"/>
    <property type="project" value="TreeGrafter"/>
</dbReference>
<dbReference type="GO" id="GO:0005524">
    <property type="term" value="F:ATP binding"/>
    <property type="evidence" value="ECO:0007669"/>
    <property type="project" value="UniProtKB-UniRule"/>
</dbReference>
<dbReference type="GO" id="GO:0000287">
    <property type="term" value="F:magnesium ion binding"/>
    <property type="evidence" value="ECO:0007669"/>
    <property type="project" value="UniProtKB-UniRule"/>
</dbReference>
<dbReference type="GO" id="GO:0004765">
    <property type="term" value="F:shikimate kinase activity"/>
    <property type="evidence" value="ECO:0007669"/>
    <property type="project" value="UniProtKB-UniRule"/>
</dbReference>
<dbReference type="GO" id="GO:0008652">
    <property type="term" value="P:amino acid biosynthetic process"/>
    <property type="evidence" value="ECO:0007669"/>
    <property type="project" value="UniProtKB-KW"/>
</dbReference>
<dbReference type="GO" id="GO:0009073">
    <property type="term" value="P:aromatic amino acid family biosynthetic process"/>
    <property type="evidence" value="ECO:0007669"/>
    <property type="project" value="UniProtKB-KW"/>
</dbReference>
<dbReference type="GO" id="GO:0009423">
    <property type="term" value="P:chorismate biosynthetic process"/>
    <property type="evidence" value="ECO:0007669"/>
    <property type="project" value="UniProtKB-UniRule"/>
</dbReference>
<dbReference type="CDD" id="cd00464">
    <property type="entry name" value="SK"/>
    <property type="match status" value="1"/>
</dbReference>
<dbReference type="Gene3D" id="3.40.50.300">
    <property type="entry name" value="P-loop containing nucleotide triphosphate hydrolases"/>
    <property type="match status" value="1"/>
</dbReference>
<dbReference type="HAMAP" id="MF_00109">
    <property type="entry name" value="Shikimate_kinase"/>
    <property type="match status" value="1"/>
</dbReference>
<dbReference type="HAMAP" id="MF_01269">
    <property type="entry name" value="Shikimate_kinase_2"/>
    <property type="match status" value="1"/>
</dbReference>
<dbReference type="InterPro" id="IPR027417">
    <property type="entry name" value="P-loop_NTPase"/>
</dbReference>
<dbReference type="InterPro" id="IPR031322">
    <property type="entry name" value="Shikimate/glucono_kinase"/>
</dbReference>
<dbReference type="InterPro" id="IPR000623">
    <property type="entry name" value="Shikimate_kinase/TSH1"/>
</dbReference>
<dbReference type="InterPro" id="IPR027544">
    <property type="entry name" value="Shikimate_kinase_2"/>
</dbReference>
<dbReference type="InterPro" id="IPR023000">
    <property type="entry name" value="Shikimate_kinase_CS"/>
</dbReference>
<dbReference type="NCBIfam" id="NF002988">
    <property type="entry name" value="PRK03731.1"/>
    <property type="match status" value="1"/>
</dbReference>
<dbReference type="PANTHER" id="PTHR21087">
    <property type="entry name" value="SHIKIMATE KINASE"/>
    <property type="match status" value="1"/>
</dbReference>
<dbReference type="PANTHER" id="PTHR21087:SF21">
    <property type="entry name" value="SHIKIMATE KINASE 2"/>
    <property type="match status" value="1"/>
</dbReference>
<dbReference type="Pfam" id="PF01202">
    <property type="entry name" value="SKI"/>
    <property type="match status" value="1"/>
</dbReference>
<dbReference type="PRINTS" id="PR01100">
    <property type="entry name" value="SHIKIMTKNASE"/>
</dbReference>
<dbReference type="SUPFAM" id="SSF52540">
    <property type="entry name" value="P-loop containing nucleoside triphosphate hydrolases"/>
    <property type="match status" value="1"/>
</dbReference>
<dbReference type="PROSITE" id="PS01128">
    <property type="entry name" value="SHIKIMATE_KINASE"/>
    <property type="match status" value="1"/>
</dbReference>
<organism>
    <name type="scientific">Yersinia pestis bv. Antiqua (strain Antiqua)</name>
    <dbReference type="NCBI Taxonomy" id="360102"/>
    <lineage>
        <taxon>Bacteria</taxon>
        <taxon>Pseudomonadati</taxon>
        <taxon>Pseudomonadota</taxon>
        <taxon>Gammaproteobacteria</taxon>
        <taxon>Enterobacterales</taxon>
        <taxon>Yersiniaceae</taxon>
        <taxon>Yersinia</taxon>
    </lineage>
</organism>
<name>AROL_YERPA</name>
<reference key="1">
    <citation type="journal article" date="2006" name="J. Bacteriol.">
        <title>Complete genome sequence of Yersinia pestis strains Antiqua and Nepal516: evidence of gene reduction in an emerging pathogen.</title>
        <authorList>
            <person name="Chain P.S.G."/>
            <person name="Hu P."/>
            <person name="Malfatti S.A."/>
            <person name="Radnedge L."/>
            <person name="Larimer F."/>
            <person name="Vergez L.M."/>
            <person name="Worsham P."/>
            <person name="Chu M.C."/>
            <person name="Andersen G.L."/>
        </authorList>
    </citation>
    <scope>NUCLEOTIDE SEQUENCE [LARGE SCALE GENOMIC DNA]</scope>
    <source>
        <strain>Antiqua</strain>
    </source>
</reference>
<feature type="chain" id="PRO_1000067338" description="Shikimate kinase 2">
    <location>
        <begin position="1"/>
        <end position="174"/>
    </location>
</feature>
<feature type="region of interest" description="LID domain">
    <location>
        <begin position="112"/>
        <end position="126"/>
    </location>
</feature>
<feature type="binding site" evidence="1">
    <location>
        <begin position="12"/>
        <end position="17"/>
    </location>
    <ligand>
        <name>ATP</name>
        <dbReference type="ChEBI" id="CHEBI:30616"/>
    </ligand>
</feature>
<feature type="binding site" evidence="1">
    <location>
        <position position="16"/>
    </location>
    <ligand>
        <name>Mg(2+)</name>
        <dbReference type="ChEBI" id="CHEBI:18420"/>
    </ligand>
</feature>
<feature type="binding site" evidence="1">
    <location>
        <position position="32"/>
    </location>
    <ligand>
        <name>Mg(2+)</name>
        <dbReference type="ChEBI" id="CHEBI:18420"/>
    </ligand>
</feature>
<feature type="binding site" evidence="1">
    <location>
        <position position="34"/>
    </location>
    <ligand>
        <name>substrate</name>
    </ligand>
</feature>
<feature type="binding site" evidence="1">
    <location>
        <position position="58"/>
    </location>
    <ligand>
        <name>substrate</name>
    </ligand>
</feature>
<feature type="binding site" evidence="1">
    <location>
        <position position="79"/>
    </location>
    <ligand>
        <name>substrate</name>
    </ligand>
</feature>
<feature type="binding site" evidence="1">
    <location>
        <position position="120"/>
    </location>
    <ligand>
        <name>ATP</name>
        <dbReference type="ChEBI" id="CHEBI:30616"/>
    </ligand>
</feature>
<feature type="binding site" evidence="1">
    <location>
        <position position="139"/>
    </location>
    <ligand>
        <name>substrate</name>
    </ligand>
</feature>
<feature type="binding site" evidence="1">
    <location>
        <position position="155"/>
    </location>
    <ligand>
        <name>ATP</name>
        <dbReference type="ChEBI" id="CHEBI:30616"/>
    </ligand>
</feature>
<gene>
    <name evidence="1" type="primary">aroL</name>
    <name type="ordered locus">YPA_2707</name>
</gene>
<protein>
    <recommendedName>
        <fullName evidence="1">Shikimate kinase 2</fullName>
        <shortName evidence="1">SK 2</shortName>
        <ecNumber evidence="1">2.7.1.71</ecNumber>
    </recommendedName>
</protein>
<comment type="function">
    <text evidence="1">Catalyzes the specific phosphorylation of the 3-hydroxyl group of shikimic acid using ATP as a cosubstrate.</text>
</comment>
<comment type="catalytic activity">
    <reaction evidence="1">
        <text>shikimate + ATP = 3-phosphoshikimate + ADP + H(+)</text>
        <dbReference type="Rhea" id="RHEA:13121"/>
        <dbReference type="ChEBI" id="CHEBI:15378"/>
        <dbReference type="ChEBI" id="CHEBI:30616"/>
        <dbReference type="ChEBI" id="CHEBI:36208"/>
        <dbReference type="ChEBI" id="CHEBI:145989"/>
        <dbReference type="ChEBI" id="CHEBI:456216"/>
        <dbReference type="EC" id="2.7.1.71"/>
    </reaction>
</comment>
<comment type="cofactor">
    <cofactor evidence="1">
        <name>Mg(2+)</name>
        <dbReference type="ChEBI" id="CHEBI:18420"/>
    </cofactor>
    <text evidence="1">Binds 1 Mg(2+) ion per subunit.</text>
</comment>
<comment type="pathway">
    <text evidence="1">Metabolic intermediate biosynthesis; chorismate biosynthesis; chorismate from D-erythrose 4-phosphate and phosphoenolpyruvate: step 5/7.</text>
</comment>
<comment type="subunit">
    <text evidence="1">Monomer.</text>
</comment>
<comment type="subcellular location">
    <subcellularLocation>
        <location evidence="1">Cytoplasm</location>
    </subcellularLocation>
</comment>
<comment type="domain">
    <text evidence="1">The LID domain closes over the active site upon ATP binding.</text>
</comment>
<comment type="similarity">
    <text evidence="1">Belongs to the shikimate kinase family. AroL subfamily.</text>
</comment>
<keyword id="KW-0028">Amino-acid biosynthesis</keyword>
<keyword id="KW-0057">Aromatic amino acid biosynthesis</keyword>
<keyword id="KW-0067">ATP-binding</keyword>
<keyword id="KW-0963">Cytoplasm</keyword>
<keyword id="KW-0418">Kinase</keyword>
<keyword id="KW-0460">Magnesium</keyword>
<keyword id="KW-0479">Metal-binding</keyword>
<keyword id="KW-0547">Nucleotide-binding</keyword>
<keyword id="KW-0808">Transferase</keyword>
<evidence type="ECO:0000255" key="1">
    <source>
        <dbReference type="HAMAP-Rule" id="MF_01269"/>
    </source>
</evidence>